<sequence>MEVANATQQKHFVLVHGAGHGAWCWYKLKSLLESSRHKVTAIDLATSGVNPKRLDEVDTLQDYCLPLLELMAAIPQDDKVIVVGHSYGGFCIALAMDLYPKKISIGVFIGSIMPDSTHPPIYFFNQYYEWNPDGDDSPDTKVETYGCPDQPRTVIHFGPIYLSTKLYQNCTSEEIELAKVLVRPVTLFSEDLSKLKAFSEEGYGSVKRGYIICSEDKAFPVGLQHWLVDNVGVSEVKEIKGADHMPMISKPQELCQCLVEIAEKVV</sequence>
<dbReference type="EC" id="3.1.1.123" evidence="3"/>
<dbReference type="EMBL" id="OM304292">
    <property type="protein sequence ID" value="UQZ09623.1"/>
    <property type="molecule type" value="mRNA"/>
</dbReference>
<dbReference type="SMR" id="P0DO81"/>
<dbReference type="KEGG" id="ag:UQZ09623"/>
<dbReference type="GO" id="GO:0016787">
    <property type="term" value="F:hydrolase activity"/>
    <property type="evidence" value="ECO:0000314"/>
    <property type="project" value="UniProtKB"/>
</dbReference>
<dbReference type="GO" id="GO:0080030">
    <property type="term" value="F:methyl indole-3-acetate esterase activity"/>
    <property type="evidence" value="ECO:0007669"/>
    <property type="project" value="TreeGrafter"/>
</dbReference>
<dbReference type="GO" id="GO:0080032">
    <property type="term" value="F:methyl jasmonate esterase activity"/>
    <property type="evidence" value="ECO:0007669"/>
    <property type="project" value="TreeGrafter"/>
</dbReference>
<dbReference type="GO" id="GO:0080031">
    <property type="term" value="F:methyl salicylate esterase activity"/>
    <property type="evidence" value="ECO:0007669"/>
    <property type="project" value="TreeGrafter"/>
</dbReference>
<dbReference type="GO" id="GO:0009821">
    <property type="term" value="P:alkaloid biosynthetic process"/>
    <property type="evidence" value="ECO:0000314"/>
    <property type="project" value="UniProtKB"/>
</dbReference>
<dbReference type="GO" id="GO:0009694">
    <property type="term" value="P:jasmonic acid metabolic process"/>
    <property type="evidence" value="ECO:0007669"/>
    <property type="project" value="TreeGrafter"/>
</dbReference>
<dbReference type="GO" id="GO:0009696">
    <property type="term" value="P:salicylic acid metabolic process"/>
    <property type="evidence" value="ECO:0007669"/>
    <property type="project" value="TreeGrafter"/>
</dbReference>
<dbReference type="FunFam" id="3.40.50.1820:FF:000051">
    <property type="entry name" value="(S)-hydroxynitrile lyase"/>
    <property type="match status" value="1"/>
</dbReference>
<dbReference type="Gene3D" id="3.40.50.1820">
    <property type="entry name" value="alpha/beta hydrolase"/>
    <property type="match status" value="1"/>
</dbReference>
<dbReference type="InterPro" id="IPR000073">
    <property type="entry name" value="AB_hydrolase_1"/>
</dbReference>
<dbReference type="InterPro" id="IPR029058">
    <property type="entry name" value="AB_hydrolase_fold"/>
</dbReference>
<dbReference type="InterPro" id="IPR045889">
    <property type="entry name" value="MES/HNL"/>
</dbReference>
<dbReference type="PANTHER" id="PTHR10992:SF1083">
    <property type="entry name" value="METHYLESTERASE 1"/>
    <property type="match status" value="1"/>
</dbReference>
<dbReference type="PANTHER" id="PTHR10992">
    <property type="entry name" value="METHYLESTERASE FAMILY MEMBER"/>
    <property type="match status" value="1"/>
</dbReference>
<dbReference type="Pfam" id="PF12697">
    <property type="entry name" value="Abhydrolase_6"/>
    <property type="match status" value="1"/>
</dbReference>
<dbReference type="SUPFAM" id="SSF53474">
    <property type="entry name" value="alpha/beta-Hydrolases"/>
    <property type="match status" value="1"/>
</dbReference>
<reference key="1">
    <citation type="journal article" date="2022" name="Nature">
        <title>Biosynthesis of strychnine.</title>
        <authorList>
            <person name="Hong B."/>
            <person name="Grzech D."/>
            <person name="Caputi L."/>
            <person name="Sonawane P."/>
            <person name="Lopez C.E.R."/>
            <person name="Kamileen M.O."/>
            <person name="Hernandez Lozada N.J."/>
            <person name="Grabe V."/>
            <person name="O'Connor S.E."/>
        </authorList>
    </citation>
    <scope>NUCLEOTIDE SEQUENCE [MRNA]</scope>
    <scope>FUNCTION</scope>
    <scope>CATALYTIC ACTIVITY</scope>
    <scope>PATHWAY</scope>
    <scope>TISSUE SPECIFICITY</scope>
</reference>
<comment type="function">
    <text evidence="3">Hydrolase involved in the biosynthesis of curare monoterpene indole alkaloids (MIAs), natural products such as strychnine, a neurotoxic compound used as a pesticide to control rodents, and its pharmacologically active derivatives, including brucine, used to regulate blood pressure (PubMed:35794473). Curare alkaloids act as animal glycine receptor antagonists (PubMed:35794473). Catalyzes the conversion of dehydropreakuammicine to norfluorocurarine (PubMed:35794473).</text>
</comment>
<comment type="catalytic activity">
    <reaction evidence="3">
        <text>17-dehydropreakuammicine + H2O = norfluorocurarine + methanol + CO2</text>
        <dbReference type="Rhea" id="RHEA:80899"/>
        <dbReference type="ChEBI" id="CHEBI:15377"/>
        <dbReference type="ChEBI" id="CHEBI:16526"/>
        <dbReference type="ChEBI" id="CHEBI:17790"/>
        <dbReference type="ChEBI" id="CHEBI:230469"/>
        <dbReference type="ChEBI" id="CHEBI:231650"/>
        <dbReference type="EC" id="3.1.1.123"/>
    </reaction>
    <physiologicalReaction direction="left-to-right" evidence="3">
        <dbReference type="Rhea" id="RHEA:80900"/>
    </physiologicalReaction>
</comment>
<comment type="pathway">
    <text evidence="3">Alkaloid biosynthesis.</text>
</comment>
<comment type="subunit">
    <text evidence="1">Homodimer.</text>
</comment>
<comment type="tissue specificity">
    <text evidence="3">Mainly expressed in roots.</text>
</comment>
<comment type="similarity">
    <text evidence="5">Belongs to the AB hydrolase superfamily.</text>
</comment>
<accession>P0DO81</accession>
<name>NS2_STRNX</name>
<organism>
    <name type="scientific">Strychnos nux-vomica</name>
    <name type="common">Poison nut</name>
    <name type="synonym">Strychnine tree</name>
    <dbReference type="NCBI Taxonomy" id="28545"/>
    <lineage>
        <taxon>Eukaryota</taxon>
        <taxon>Viridiplantae</taxon>
        <taxon>Streptophyta</taxon>
        <taxon>Embryophyta</taxon>
        <taxon>Tracheophyta</taxon>
        <taxon>Spermatophyta</taxon>
        <taxon>Magnoliopsida</taxon>
        <taxon>eudicotyledons</taxon>
        <taxon>Gunneridae</taxon>
        <taxon>Pentapetalae</taxon>
        <taxon>asterids</taxon>
        <taxon>lamiids</taxon>
        <taxon>Gentianales</taxon>
        <taxon>Loganiaceae</taxon>
        <taxon>Strychnos</taxon>
    </lineage>
</organism>
<evidence type="ECO:0000250" key="1">
    <source>
        <dbReference type="UniProtKB" id="Q9SE93"/>
    </source>
</evidence>
<evidence type="ECO:0000255" key="2"/>
<evidence type="ECO:0000269" key="3">
    <source>
    </source>
</evidence>
<evidence type="ECO:0000303" key="4">
    <source>
    </source>
</evidence>
<evidence type="ECO:0000305" key="5"/>
<proteinExistence type="evidence at protein level"/>
<feature type="chain" id="PRO_0000461119" description="Norfluorocurarine synthase 2">
    <location>
        <begin position="1"/>
        <end position="266"/>
    </location>
</feature>
<feature type="domain" description="AB hydrolase-1" evidence="2">
    <location>
        <begin position="11"/>
        <end position="121"/>
    </location>
</feature>
<feature type="active site" evidence="1">
    <location>
        <position position="86"/>
    </location>
</feature>
<feature type="active site" evidence="1">
    <location>
        <position position="216"/>
    </location>
</feature>
<feature type="active site" evidence="1">
    <location>
        <position position="244"/>
    </location>
</feature>
<protein>
    <recommendedName>
        <fullName evidence="4">Norfluorocurarine synthase 2</fullName>
        <shortName evidence="4">SnvNS2</shortName>
        <ecNumber evidence="3">3.1.1.123</ecNumber>
    </recommendedName>
</protein>
<gene>
    <name evidence="4" type="primary">NS2</name>
</gene>
<keyword id="KW-0017">Alkaloid metabolism</keyword>
<keyword id="KW-0378">Hydrolase</keyword>
<keyword id="KW-0719">Serine esterase</keyword>